<protein>
    <recommendedName>
        <fullName evidence="1">Nucleotide-binding protein YajQ</fullName>
    </recommendedName>
</protein>
<keyword id="KW-0547">Nucleotide-binding</keyword>
<keyword id="KW-1185">Reference proteome</keyword>
<proteinExistence type="inferred from homology"/>
<name>YAJQ_ECO24</name>
<dbReference type="EMBL" id="CP000800">
    <property type="protein sequence ID" value="ABV16579.1"/>
    <property type="molecule type" value="Genomic_DNA"/>
</dbReference>
<dbReference type="RefSeq" id="WP_001138904.1">
    <property type="nucleotide sequence ID" value="NC_009801.1"/>
</dbReference>
<dbReference type="BMRB" id="A7ZII0"/>
<dbReference type="SMR" id="A7ZII0"/>
<dbReference type="GeneID" id="93777034"/>
<dbReference type="KEGG" id="ecw:EcE24377A_0458"/>
<dbReference type="HOGENOM" id="CLU_099839_1_0_6"/>
<dbReference type="Proteomes" id="UP000001122">
    <property type="component" value="Chromosome"/>
</dbReference>
<dbReference type="GO" id="GO:0005829">
    <property type="term" value="C:cytosol"/>
    <property type="evidence" value="ECO:0007669"/>
    <property type="project" value="TreeGrafter"/>
</dbReference>
<dbReference type="GO" id="GO:0000166">
    <property type="term" value="F:nucleotide binding"/>
    <property type="evidence" value="ECO:0007669"/>
    <property type="project" value="TreeGrafter"/>
</dbReference>
<dbReference type="CDD" id="cd11740">
    <property type="entry name" value="YajQ_like"/>
    <property type="match status" value="1"/>
</dbReference>
<dbReference type="FunFam" id="3.30.70.860:FF:000001">
    <property type="entry name" value="UPF0234 protein YajQ"/>
    <property type="match status" value="1"/>
</dbReference>
<dbReference type="FunFam" id="3.30.70.990:FF:000001">
    <property type="entry name" value="UPF0234 protein YajQ"/>
    <property type="match status" value="1"/>
</dbReference>
<dbReference type="Gene3D" id="3.30.70.860">
    <property type="match status" value="1"/>
</dbReference>
<dbReference type="Gene3D" id="3.30.70.990">
    <property type="entry name" value="YajQ-like, domain 2"/>
    <property type="match status" value="1"/>
</dbReference>
<dbReference type="HAMAP" id="MF_00632">
    <property type="entry name" value="YajQ"/>
    <property type="match status" value="1"/>
</dbReference>
<dbReference type="InterPro" id="IPR007551">
    <property type="entry name" value="DUF520"/>
</dbReference>
<dbReference type="InterPro" id="IPR035571">
    <property type="entry name" value="UPF0234-like_C"/>
</dbReference>
<dbReference type="InterPro" id="IPR035570">
    <property type="entry name" value="UPF0234_N"/>
</dbReference>
<dbReference type="InterPro" id="IPR036183">
    <property type="entry name" value="YajQ-like_sf"/>
</dbReference>
<dbReference type="NCBIfam" id="NF003819">
    <property type="entry name" value="PRK05412.1"/>
    <property type="match status" value="1"/>
</dbReference>
<dbReference type="PANTHER" id="PTHR30476">
    <property type="entry name" value="UPF0234 PROTEIN YAJQ"/>
    <property type="match status" value="1"/>
</dbReference>
<dbReference type="PANTHER" id="PTHR30476:SF0">
    <property type="entry name" value="UPF0234 PROTEIN YAJQ"/>
    <property type="match status" value="1"/>
</dbReference>
<dbReference type="Pfam" id="PF04461">
    <property type="entry name" value="DUF520"/>
    <property type="match status" value="1"/>
</dbReference>
<dbReference type="SUPFAM" id="SSF89963">
    <property type="entry name" value="YajQ-like"/>
    <property type="match status" value="2"/>
</dbReference>
<comment type="function">
    <text evidence="1">Nucleotide-binding protein.</text>
</comment>
<comment type="similarity">
    <text evidence="1">Belongs to the YajQ family.</text>
</comment>
<sequence>MPSFDIVSEVDLQEARNAVDNASREVESRFDFRNVEASFELNDASKTIKVLSESDFQVNQLLDILRAKLLKRGIEGSSLDVPENIVHSGKTWFVEAKLKQGIESATQKKIVKMIKDSKLKVQAQIQGDEIRVTGKSRDDLQAVMAMVRGGDLGQPFQFKNFRD</sequence>
<reference key="1">
    <citation type="journal article" date="2008" name="J. Bacteriol.">
        <title>The pangenome structure of Escherichia coli: comparative genomic analysis of E. coli commensal and pathogenic isolates.</title>
        <authorList>
            <person name="Rasko D.A."/>
            <person name="Rosovitz M.J."/>
            <person name="Myers G.S.A."/>
            <person name="Mongodin E.F."/>
            <person name="Fricke W.F."/>
            <person name="Gajer P."/>
            <person name="Crabtree J."/>
            <person name="Sebaihia M."/>
            <person name="Thomson N.R."/>
            <person name="Chaudhuri R."/>
            <person name="Henderson I.R."/>
            <person name="Sperandio V."/>
            <person name="Ravel J."/>
        </authorList>
    </citation>
    <scope>NUCLEOTIDE SEQUENCE [LARGE SCALE GENOMIC DNA]</scope>
    <source>
        <strain>E24377A / ETEC</strain>
    </source>
</reference>
<feature type="chain" id="PRO_1000061398" description="Nucleotide-binding protein YajQ">
    <location>
        <begin position="1"/>
        <end position="163"/>
    </location>
</feature>
<evidence type="ECO:0000255" key="1">
    <source>
        <dbReference type="HAMAP-Rule" id="MF_00632"/>
    </source>
</evidence>
<organism>
    <name type="scientific">Escherichia coli O139:H28 (strain E24377A / ETEC)</name>
    <dbReference type="NCBI Taxonomy" id="331111"/>
    <lineage>
        <taxon>Bacteria</taxon>
        <taxon>Pseudomonadati</taxon>
        <taxon>Pseudomonadota</taxon>
        <taxon>Gammaproteobacteria</taxon>
        <taxon>Enterobacterales</taxon>
        <taxon>Enterobacteriaceae</taxon>
        <taxon>Escherichia</taxon>
    </lineage>
</organism>
<accession>A7ZII0</accession>
<gene>
    <name evidence="1" type="primary">yajQ</name>
    <name type="ordered locus">EcE24377A_0458</name>
</gene>